<comment type="similarity">
    <text evidence="2">Belongs to the 4-oxalocrotonate tautomerase family.</text>
</comment>
<dbReference type="EC" id="5.3.2.-"/>
<dbReference type="EMBL" id="AL646052">
    <property type="protein sequence ID" value="CAD14509.1"/>
    <property type="molecule type" value="Genomic_DNA"/>
</dbReference>
<dbReference type="RefSeq" id="WP_011000761.1">
    <property type="nucleotide sequence ID" value="NC_003295.1"/>
</dbReference>
<dbReference type="SMR" id="Q8Y183"/>
<dbReference type="STRING" id="267608.RSc0807"/>
<dbReference type="EnsemblBacteria" id="CAD14509">
    <property type="protein sequence ID" value="CAD14509"/>
    <property type="gene ID" value="RSc0807"/>
</dbReference>
<dbReference type="KEGG" id="rso:RSc0807"/>
<dbReference type="eggNOG" id="COG1942">
    <property type="taxonomic scope" value="Bacteria"/>
</dbReference>
<dbReference type="HOGENOM" id="CLU_148073_5_3_4"/>
<dbReference type="Proteomes" id="UP000001436">
    <property type="component" value="Chromosome"/>
</dbReference>
<dbReference type="GO" id="GO:0016853">
    <property type="term" value="F:isomerase activity"/>
    <property type="evidence" value="ECO:0007669"/>
    <property type="project" value="UniProtKB-KW"/>
</dbReference>
<dbReference type="Gene3D" id="3.30.429.10">
    <property type="entry name" value="Macrophage Migration Inhibitory Factor"/>
    <property type="match status" value="1"/>
</dbReference>
<dbReference type="InterPro" id="IPR018191">
    <property type="entry name" value="4-OT"/>
</dbReference>
<dbReference type="InterPro" id="IPR004370">
    <property type="entry name" value="4-OT-like_dom"/>
</dbReference>
<dbReference type="InterPro" id="IPR014347">
    <property type="entry name" value="Tautomerase/MIF_sf"/>
</dbReference>
<dbReference type="NCBIfam" id="NF001966">
    <property type="entry name" value="PRK00745.1"/>
    <property type="match status" value="1"/>
</dbReference>
<dbReference type="NCBIfam" id="NF002571">
    <property type="entry name" value="PRK02220.1"/>
    <property type="match status" value="1"/>
</dbReference>
<dbReference type="NCBIfam" id="TIGR00013">
    <property type="entry name" value="taut"/>
    <property type="match status" value="1"/>
</dbReference>
<dbReference type="PANTHER" id="PTHR35530:SF1">
    <property type="entry name" value="2-HYDROXYMUCONATE TAUTOMERASE"/>
    <property type="match status" value="1"/>
</dbReference>
<dbReference type="PANTHER" id="PTHR35530">
    <property type="entry name" value="TAUTOMERASE-RELATED"/>
    <property type="match status" value="1"/>
</dbReference>
<dbReference type="Pfam" id="PF01361">
    <property type="entry name" value="Tautomerase"/>
    <property type="match status" value="1"/>
</dbReference>
<dbReference type="SUPFAM" id="SSF55331">
    <property type="entry name" value="Tautomerase/MIF"/>
    <property type="match status" value="1"/>
</dbReference>
<reference key="1">
    <citation type="journal article" date="2002" name="Nature">
        <title>Genome sequence of the plant pathogen Ralstonia solanacearum.</title>
        <authorList>
            <person name="Salanoubat M."/>
            <person name="Genin S."/>
            <person name="Artiguenave F."/>
            <person name="Gouzy J."/>
            <person name="Mangenot S."/>
            <person name="Arlat M."/>
            <person name="Billault A."/>
            <person name="Brottier P."/>
            <person name="Camus J.-C."/>
            <person name="Cattolico L."/>
            <person name="Chandler M."/>
            <person name="Choisne N."/>
            <person name="Claudel-Renard C."/>
            <person name="Cunnac S."/>
            <person name="Demange N."/>
            <person name="Gaspin C."/>
            <person name="Lavie M."/>
            <person name="Moisan A."/>
            <person name="Robert C."/>
            <person name="Saurin W."/>
            <person name="Schiex T."/>
            <person name="Siguier P."/>
            <person name="Thebault P."/>
            <person name="Whalen M."/>
            <person name="Wincker P."/>
            <person name="Levy M."/>
            <person name="Weissenbach J."/>
            <person name="Boucher C.A."/>
        </authorList>
    </citation>
    <scope>NUCLEOTIDE SEQUENCE [LARGE SCALE GENOMIC DNA]</scope>
    <source>
        <strain>ATCC BAA-1114 / GMI1000</strain>
    </source>
</reference>
<evidence type="ECO:0000250" key="1"/>
<evidence type="ECO:0000305" key="2"/>
<keyword id="KW-0413">Isomerase</keyword>
<keyword id="KW-1185">Reference proteome</keyword>
<name>Y807_RALN1</name>
<accession>Q8Y183</accession>
<protein>
    <recommendedName>
        <fullName>Probable tautomerase RSc0807</fullName>
        <ecNumber>5.3.2.-</ecNumber>
    </recommendedName>
</protein>
<sequence>MPTFHIEMFEGRSADQKRKLVEEVTRVTCETLGCAPGAVDIIIAEVKRENWATGGVLWSEQK</sequence>
<proteinExistence type="inferred from homology"/>
<organism>
    <name type="scientific">Ralstonia nicotianae (strain ATCC BAA-1114 / GMI1000)</name>
    <name type="common">Ralstonia solanacearum</name>
    <dbReference type="NCBI Taxonomy" id="267608"/>
    <lineage>
        <taxon>Bacteria</taxon>
        <taxon>Pseudomonadati</taxon>
        <taxon>Pseudomonadota</taxon>
        <taxon>Betaproteobacteria</taxon>
        <taxon>Burkholderiales</taxon>
        <taxon>Burkholderiaceae</taxon>
        <taxon>Ralstonia</taxon>
        <taxon>Ralstonia solanacearum species complex</taxon>
    </lineage>
</organism>
<gene>
    <name type="ordered locus">RSc0807</name>
    <name type="ORF">RS05015</name>
</gene>
<feature type="initiator methionine" description="Removed" evidence="1">
    <location>
        <position position="1"/>
    </location>
</feature>
<feature type="chain" id="PRO_0000209537" description="Probable tautomerase RSc0807">
    <location>
        <begin position="2"/>
        <end position="62"/>
    </location>
</feature>
<feature type="active site" description="Proton acceptor; via imino nitrogen" evidence="1">
    <location>
        <position position="2"/>
    </location>
</feature>